<gene>
    <name type="primary">BNA2</name>
    <name type="ordered locus">YJR078W</name>
    <name type="ORF">J1840</name>
</gene>
<keyword id="KW-0223">Dioxygenase</keyword>
<keyword id="KW-0349">Heme</keyword>
<keyword id="KW-0408">Iron</keyword>
<keyword id="KW-0479">Metal-binding</keyword>
<keyword id="KW-0560">Oxidoreductase</keyword>
<keyword id="KW-1185">Reference proteome</keyword>
<proteinExistence type="evidence at protein level"/>
<dbReference type="EC" id="1.13.11.52"/>
<dbReference type="EMBL" id="Z49578">
    <property type="protein sequence ID" value="CAA89606.1"/>
    <property type="molecule type" value="Genomic_DNA"/>
</dbReference>
<dbReference type="EMBL" id="L47993">
    <property type="protein sequence ID" value="AAB39303.1"/>
    <property type="molecule type" value="Genomic_DNA"/>
</dbReference>
<dbReference type="EMBL" id="BK006943">
    <property type="protein sequence ID" value="DAA08864.1"/>
    <property type="molecule type" value="Genomic_DNA"/>
</dbReference>
<dbReference type="PIR" id="S57097">
    <property type="entry name" value="S57097"/>
</dbReference>
<dbReference type="RefSeq" id="NP_012612.3">
    <property type="nucleotide sequence ID" value="NM_001181736.3"/>
</dbReference>
<dbReference type="SMR" id="P47125"/>
<dbReference type="BioGRID" id="33834">
    <property type="interactions" value="72"/>
</dbReference>
<dbReference type="FunCoup" id="P47125">
    <property type="interactions" value="200"/>
</dbReference>
<dbReference type="IntAct" id="P47125">
    <property type="interactions" value="1"/>
</dbReference>
<dbReference type="STRING" id="4932.YJR078W"/>
<dbReference type="iPTMnet" id="P47125"/>
<dbReference type="PaxDb" id="4932-YJR078W"/>
<dbReference type="PeptideAtlas" id="P47125"/>
<dbReference type="EnsemblFungi" id="YJR078W_mRNA">
    <property type="protein sequence ID" value="YJR078W"/>
    <property type="gene ID" value="YJR078W"/>
</dbReference>
<dbReference type="GeneID" id="853541"/>
<dbReference type="KEGG" id="sce:YJR078W"/>
<dbReference type="AGR" id="SGD:S000003839"/>
<dbReference type="SGD" id="S000003839">
    <property type="gene designation" value="BNA2"/>
</dbReference>
<dbReference type="VEuPathDB" id="FungiDB:YJR078W"/>
<dbReference type="eggNOG" id="ENOG502QV6W">
    <property type="taxonomic scope" value="Eukaryota"/>
</dbReference>
<dbReference type="HOGENOM" id="CLU_010089_0_0_1"/>
<dbReference type="InParanoid" id="P47125"/>
<dbReference type="OMA" id="SNKIMEP"/>
<dbReference type="OrthoDB" id="540174at2759"/>
<dbReference type="BioCyc" id="MetaCyc:YJR078W-MONOMER"/>
<dbReference type="BioCyc" id="YEAST:YJR078W-MONOMER"/>
<dbReference type="Reactome" id="R-SCE-71240">
    <property type="pathway name" value="Tryptophan catabolism"/>
</dbReference>
<dbReference type="SABIO-RK" id="P47125"/>
<dbReference type="UniPathway" id="UPA00253"/>
<dbReference type="BioGRID-ORCS" id="853541">
    <property type="hits" value="1 hit in 10 CRISPR screens"/>
</dbReference>
<dbReference type="PRO" id="PR:P47125"/>
<dbReference type="Proteomes" id="UP000002311">
    <property type="component" value="Chromosome X"/>
</dbReference>
<dbReference type="RNAct" id="P47125">
    <property type="molecule type" value="protein"/>
</dbReference>
<dbReference type="GO" id="GO:0005737">
    <property type="term" value="C:cytoplasm"/>
    <property type="evidence" value="ECO:0007005"/>
    <property type="project" value="SGD"/>
</dbReference>
<dbReference type="GO" id="GO:0020037">
    <property type="term" value="F:heme binding"/>
    <property type="evidence" value="ECO:0007669"/>
    <property type="project" value="InterPro"/>
</dbReference>
<dbReference type="GO" id="GO:0033754">
    <property type="term" value="F:indoleamine 2,3-dioxygenase activity"/>
    <property type="evidence" value="ECO:0000314"/>
    <property type="project" value="SGD"/>
</dbReference>
<dbReference type="GO" id="GO:0046872">
    <property type="term" value="F:metal ion binding"/>
    <property type="evidence" value="ECO:0007669"/>
    <property type="project" value="UniProtKB-KW"/>
</dbReference>
<dbReference type="GO" id="GO:0004833">
    <property type="term" value="F:tryptophan 2,3-dioxygenase activity"/>
    <property type="evidence" value="ECO:0007669"/>
    <property type="project" value="RHEA"/>
</dbReference>
<dbReference type="GO" id="GO:0034354">
    <property type="term" value="P:'de novo' NAD biosynthetic process from L-tryptophan"/>
    <property type="evidence" value="ECO:0000316"/>
    <property type="project" value="SGD"/>
</dbReference>
<dbReference type="GO" id="GO:0019441">
    <property type="term" value="P:L-tryptophan catabolic process to kynurenine"/>
    <property type="evidence" value="ECO:0000318"/>
    <property type="project" value="GO_Central"/>
</dbReference>
<dbReference type="FunFam" id="1.20.58.480:FF:000004">
    <property type="entry name" value="Indoleamine 2,3-dioxygenase subfamily"/>
    <property type="match status" value="1"/>
</dbReference>
<dbReference type="Gene3D" id="1.20.58.480">
    <property type="match status" value="1"/>
</dbReference>
<dbReference type="InterPro" id="IPR000898">
    <property type="entry name" value="Indolamine_dOase"/>
</dbReference>
<dbReference type="InterPro" id="IPR037217">
    <property type="entry name" value="Trp/Indoleamine_2_3_dOase-like"/>
</dbReference>
<dbReference type="PANTHER" id="PTHR28657">
    <property type="entry name" value="INDOLEAMINE 2,3-DIOXYGENASE"/>
    <property type="match status" value="1"/>
</dbReference>
<dbReference type="PANTHER" id="PTHR28657:SF5">
    <property type="entry name" value="INDOLEAMINE 2,3-DIOXYGENASE"/>
    <property type="match status" value="1"/>
</dbReference>
<dbReference type="Pfam" id="PF01231">
    <property type="entry name" value="IDO"/>
    <property type="match status" value="1"/>
</dbReference>
<dbReference type="SUPFAM" id="SSF140959">
    <property type="entry name" value="Indolic compounds 2,3-dioxygenase-like"/>
    <property type="match status" value="1"/>
</dbReference>
<dbReference type="PROSITE" id="PS00876">
    <property type="entry name" value="IDO_1"/>
    <property type="match status" value="1"/>
</dbReference>
<dbReference type="PROSITE" id="PS00877">
    <property type="entry name" value="IDO_2"/>
    <property type="match status" value="1"/>
</dbReference>
<feature type="chain" id="PRO_0000215208" description="Indoleamine 2,3-dioxygenase">
    <location>
        <begin position="1"/>
        <end position="453"/>
    </location>
</feature>
<feature type="binding site" description="proximal binding residue" evidence="1">
    <location>
        <position position="331"/>
    </location>
    <ligand>
        <name>heme</name>
        <dbReference type="ChEBI" id="CHEBI:30413"/>
    </ligand>
    <ligandPart>
        <name>Fe</name>
        <dbReference type="ChEBI" id="CHEBI:18248"/>
    </ligandPart>
</feature>
<sequence length="453" mass="50775">MNNTSITGPQVLHRTKMRPLPVLEKYCISPHHGFLDDRLPLTRLSSKKYMKWEEIVADLPSLLQEDNKVRSVIDGLDVLDLDETILGDVRELRRAYSILGFMAHAYIWASGTPRDVLPECIARPLLETAHILGVPPLATYSSLVLWNFKVTDECKKTETGCLDLENITTINTFTGTVDESWFYLVSVRFEKIGSACLNHGLQILRAIRSGDKGDANVIDGLEGLAATIERLSKALMEMELKCEPNVFYFKIRPFLAGWTNMSHMGLPQGVRYGAEGQYRIFSGGSNAQSSLIQTLDILLGVKHTANAAHSSQGDSKINYLDEMKKYMPREHREFLYHLESVCNIREYVSRNASNRALQEAYGRCISMLKIFRDNHIQIVTKYIILPSNSKQHGSNKPNVLSPIEPNTKASGCLGHKVASSKTIGTGGTRLMPFLKQCRDETVATADIKNEDKN</sequence>
<protein>
    <recommendedName>
        <fullName>Indoleamine 2,3-dioxygenase</fullName>
        <shortName>IDO</shortName>
        <ecNumber>1.13.11.52</ecNumber>
    </recommendedName>
    <alternativeName>
        <fullName>Biosynthesis of nicotinic acid protein 2</fullName>
    </alternativeName>
</protein>
<organism>
    <name type="scientific">Saccharomyces cerevisiae (strain ATCC 204508 / S288c)</name>
    <name type="common">Baker's yeast</name>
    <dbReference type="NCBI Taxonomy" id="559292"/>
    <lineage>
        <taxon>Eukaryota</taxon>
        <taxon>Fungi</taxon>
        <taxon>Dikarya</taxon>
        <taxon>Ascomycota</taxon>
        <taxon>Saccharomycotina</taxon>
        <taxon>Saccharomycetes</taxon>
        <taxon>Saccharomycetales</taxon>
        <taxon>Saccharomycetaceae</taxon>
        <taxon>Saccharomyces</taxon>
    </lineage>
</organism>
<accession>P47125</accession>
<accession>D6VWP8</accession>
<evidence type="ECO:0000250" key="1"/>
<evidence type="ECO:0000269" key="2">
    <source>
    </source>
</evidence>
<evidence type="ECO:0000269" key="3">
    <source>
    </source>
</evidence>
<evidence type="ECO:0000269" key="4">
    <source>
    </source>
</evidence>
<evidence type="ECO:0000269" key="5">
    <source>
    </source>
</evidence>
<evidence type="ECO:0000269" key="6">
    <source>
    </source>
</evidence>
<evidence type="ECO:0000269" key="7">
    <source>
    </source>
</evidence>
<evidence type="ECO:0000269" key="8">
    <source>
    </source>
</evidence>
<evidence type="ECO:0000305" key="9"/>
<comment type="function">
    <text evidence="2 4 6 7">Catalyzes the first step in tryptophan catabolism in order to supply de novo nicotinamide adenine dinucleotide (NAD(+)) via the kynurenine pathway. Plays a role in the cellular response to telomere uncapping.</text>
</comment>
<comment type="catalytic activity">
    <reaction evidence="7">
        <text>D-tryptophan + O2 = N-formyl-D-kynurenine</text>
        <dbReference type="Rhea" id="RHEA:14189"/>
        <dbReference type="ChEBI" id="CHEBI:15379"/>
        <dbReference type="ChEBI" id="CHEBI:57719"/>
        <dbReference type="ChEBI" id="CHEBI:60051"/>
        <dbReference type="EC" id="1.13.11.52"/>
    </reaction>
</comment>
<comment type="catalytic activity">
    <reaction evidence="7">
        <text>L-tryptophan + O2 = N-formyl-L-kynurenine</text>
        <dbReference type="Rhea" id="RHEA:24536"/>
        <dbReference type="ChEBI" id="CHEBI:15379"/>
        <dbReference type="ChEBI" id="CHEBI:57912"/>
        <dbReference type="ChEBI" id="CHEBI:58629"/>
        <dbReference type="EC" id="1.13.11.52"/>
    </reaction>
</comment>
<comment type="cofactor">
    <cofactor evidence="1">
        <name>heme</name>
        <dbReference type="ChEBI" id="CHEBI:30413"/>
    </cofactor>
    <text evidence="1">Binds 1 heme group per subunit.</text>
</comment>
<comment type="biophysicochemical properties">
    <kinetics>
        <KM evidence="7">412 uM for L-tryptophan</KM>
        <KM evidence="7">9.2 mM for D-tryptophan</KM>
    </kinetics>
</comment>
<comment type="pathway">
    <text evidence="2">Cofactor biosynthesis; NAD(+) biosynthesis.</text>
</comment>
<comment type="induction">
    <text evidence="3 4 8">Expression is mediated by the AFT2, HCM1, and SUM1 transcription factors. Up-regulated in absence of NPT1.</text>
</comment>
<comment type="miscellaneous">
    <text evidence="5">Present with 149 molecules/cell in log phase SD medium.</text>
</comment>
<comment type="similarity">
    <text evidence="9">Belongs to the indoleamine 2,3-dioxygenase family.</text>
</comment>
<reference key="1">
    <citation type="journal article" date="1996" name="Yeast">
        <title>Analysis of a 62 kb DNA sequence of chromosome X reveals 36 open reading frames and a gene cluster with a counterpart on chromosome XI.</title>
        <authorList>
            <person name="Huang M.-E."/>
            <person name="Manus V."/>
            <person name="Chuat J.-C."/>
            <person name="Galibert F."/>
        </authorList>
    </citation>
    <scope>NUCLEOTIDE SEQUENCE [GENOMIC DNA]</scope>
    <source>
        <strain>ATCC 204508 / S288c</strain>
    </source>
</reference>
<reference key="2">
    <citation type="journal article" date="1996" name="EMBO J.">
        <title>Complete nucleotide sequence of Saccharomyces cerevisiae chromosome X.</title>
        <authorList>
            <person name="Galibert F."/>
            <person name="Alexandraki D."/>
            <person name="Baur A."/>
            <person name="Boles E."/>
            <person name="Chalwatzis N."/>
            <person name="Chuat J.-C."/>
            <person name="Coster F."/>
            <person name="Cziepluch C."/>
            <person name="de Haan M."/>
            <person name="Domdey H."/>
            <person name="Durand P."/>
            <person name="Entian K.-D."/>
            <person name="Gatius M."/>
            <person name="Goffeau A."/>
            <person name="Grivell L.A."/>
            <person name="Hennemann A."/>
            <person name="Herbert C.J."/>
            <person name="Heumann K."/>
            <person name="Hilger F."/>
            <person name="Hollenberg C.P."/>
            <person name="Huang M.-E."/>
            <person name="Jacq C."/>
            <person name="Jauniaux J.-C."/>
            <person name="Katsoulou C."/>
            <person name="Kirchrath L."/>
            <person name="Kleine K."/>
            <person name="Kordes E."/>
            <person name="Koetter P."/>
            <person name="Liebl S."/>
            <person name="Louis E.J."/>
            <person name="Manus V."/>
            <person name="Mewes H.-W."/>
            <person name="Miosga T."/>
            <person name="Obermaier B."/>
            <person name="Perea J."/>
            <person name="Pohl T.M."/>
            <person name="Portetelle D."/>
            <person name="Pujol A."/>
            <person name="Purnelle B."/>
            <person name="Ramezani Rad M."/>
            <person name="Rasmussen S.W."/>
            <person name="Rose M."/>
            <person name="Rossau R."/>
            <person name="Schaaff-Gerstenschlaeger I."/>
            <person name="Smits P.H.M."/>
            <person name="Scarcez T."/>
            <person name="Soriano N."/>
            <person name="To Van D."/>
            <person name="Tzermia M."/>
            <person name="Van Broekhoven A."/>
            <person name="Vandenbol M."/>
            <person name="Wedler H."/>
            <person name="von Wettstein D."/>
            <person name="Wambutt R."/>
            <person name="Zagulski M."/>
            <person name="Zollner A."/>
            <person name="Karpfinger-Hartl L."/>
        </authorList>
    </citation>
    <scope>NUCLEOTIDE SEQUENCE [LARGE SCALE GENOMIC DNA]</scope>
    <source>
        <strain>ATCC 204508 / S288c</strain>
    </source>
</reference>
<reference key="3">
    <citation type="journal article" date="2014" name="G3 (Bethesda)">
        <title>The reference genome sequence of Saccharomyces cerevisiae: Then and now.</title>
        <authorList>
            <person name="Engel S.R."/>
            <person name="Dietrich F.S."/>
            <person name="Fisk D.G."/>
            <person name="Binkley G."/>
            <person name="Balakrishnan R."/>
            <person name="Costanzo M.C."/>
            <person name="Dwight S.S."/>
            <person name="Hitz B.C."/>
            <person name="Karra K."/>
            <person name="Nash R.S."/>
            <person name="Weng S."/>
            <person name="Wong E.D."/>
            <person name="Lloyd P."/>
            <person name="Skrzypek M.S."/>
            <person name="Miyasato S.R."/>
            <person name="Simison M."/>
            <person name="Cherry J.M."/>
        </authorList>
    </citation>
    <scope>GENOME REANNOTATION</scope>
    <source>
        <strain>ATCC 204508 / S288c</strain>
    </source>
</reference>
<reference key="4">
    <citation type="journal article" date="2002" name="FEBS Lett.">
        <title>Aerobic and anaerobic NAD+ metabolism in Saccharomyces cerevisiae.</title>
        <authorList>
            <person name="Panozzo C."/>
            <person name="Nawara M."/>
            <person name="Suski C."/>
            <person name="Kucharczyka R."/>
            <person name="Skoneczny M."/>
            <person name="Becam A.-M."/>
            <person name="Rytka J."/>
            <person name="Herbert C.J."/>
        </authorList>
    </citation>
    <scope>FUNCTION</scope>
    <scope>PATHWAY</scope>
</reference>
<reference key="5">
    <citation type="journal article" date="2003" name="J. Biol. Chem.">
        <title>Aft1p and Aft2p mediate iron-responsive gene expression in yeast through related promoter elements.</title>
        <authorList>
            <person name="Rutherford J.C."/>
            <person name="Jaron S."/>
            <person name="Winge D.R."/>
        </authorList>
    </citation>
    <scope>INDUCTION</scope>
</reference>
<reference key="6">
    <citation type="journal article" date="2003" name="Mol. Cell. Biol.">
        <title>NAD+-dependent deacetylase Hst1p controls biosynthesis and cellular NAD+ levels in Saccharomyces cerevisiae.</title>
        <authorList>
            <person name="Bedalov A."/>
            <person name="Hirao M."/>
            <person name="Posakony J."/>
            <person name="Nelson M."/>
            <person name="Simon J.A."/>
        </authorList>
    </citation>
    <scope>FUNCTION</scope>
    <scope>INDUCTION</scope>
</reference>
<reference key="7">
    <citation type="journal article" date="2003" name="Nature">
        <title>Global analysis of protein expression in yeast.</title>
        <authorList>
            <person name="Ghaemmaghami S."/>
            <person name="Huh W.-K."/>
            <person name="Bower K."/>
            <person name="Howson R.W."/>
            <person name="Belle A."/>
            <person name="Dephoure N."/>
            <person name="O'Shea E.K."/>
            <person name="Weissman J.S."/>
        </authorList>
    </citation>
    <scope>LEVEL OF PROTEIN EXPRESSION [LARGE SCALE ANALYSIS]</scope>
</reference>
<reference key="8">
    <citation type="journal article" date="2008" name="Genome Biol.">
        <title>A genome wide analysis of the response to uncapped telomeres in budding yeast reveals a novel role for the NAD+ biosynthetic gene BNA2 in chromosome end protection.</title>
        <authorList>
            <person name="Greenall A."/>
            <person name="Lei G."/>
            <person name="Swan D.C."/>
            <person name="James K."/>
            <person name="Wang L."/>
            <person name="Peters H."/>
            <person name="Wipat A."/>
            <person name="Wilkinson D.J."/>
            <person name="Lydall D."/>
        </authorList>
    </citation>
    <scope>FUNCTION</scope>
</reference>
<reference key="9">
    <citation type="journal article" date="2011" name="J. Mol. Evol.">
        <title>Molecular evolution and characterization of fungal indoleamine 2,3-dioxygenases.</title>
        <authorList>
            <person name="Yuasa H.J."/>
            <person name="Ball H.J."/>
        </authorList>
    </citation>
    <scope>FUNCTION</scope>
    <scope>CATALYTIC ACTIVITY</scope>
    <scope>BIOPHYSICOCHEMICAL PROPERTIES</scope>
</reference>
<reference key="10">
    <citation type="journal article" date="2013" name="Biochim. Biophys. Acta">
        <title>The FOX transcription factor Hcm1 regulates oxidative metabolism in response to early nutrient limitation in yeast. Role of Snf1 and Tor1/Sch9 kinases.</title>
        <authorList>
            <person name="Rodriguez-Colman M.J."/>
            <person name="Sorolla M.A."/>
            <person name="Vall-Llaura N."/>
            <person name="Tamarit J."/>
            <person name="Ros J."/>
            <person name="Cabiscol E."/>
        </authorList>
    </citation>
    <scope>INDUCTION</scope>
</reference>
<name>I23O_YEAST</name>